<feature type="chain" id="PRO_0000125379" description="Carboxy-terminal kinesin 2">
    <location>
        <begin position="1"/>
        <end position="643"/>
    </location>
</feature>
<feature type="domain" description="Kinesin motor" evidence="2">
    <location>
        <begin position="294"/>
        <end position="633"/>
    </location>
</feature>
<feature type="region of interest" description="Globular">
    <location>
        <begin position="1"/>
        <end position="116"/>
    </location>
</feature>
<feature type="region of interest" description="Disordered" evidence="3">
    <location>
        <begin position="1"/>
        <end position="42"/>
    </location>
</feature>
<feature type="region of interest" description="Disordered" evidence="3">
    <location>
        <begin position="81"/>
        <end position="101"/>
    </location>
</feature>
<feature type="coiled-coil region" evidence="1">
    <location>
        <begin position="117"/>
        <end position="296"/>
    </location>
</feature>
<feature type="compositionally biased region" description="Polar residues" evidence="3">
    <location>
        <begin position="88"/>
        <end position="101"/>
    </location>
</feature>
<feature type="binding site" evidence="2">
    <location>
        <begin position="386"/>
        <end position="393"/>
    </location>
    <ligand>
        <name>ATP</name>
        <dbReference type="ChEBI" id="CHEBI:30616"/>
    </ligand>
</feature>
<accession>P79955</accession>
<proteinExistence type="evidence at transcript level"/>
<reference key="1">
    <citation type="journal article" date="1997" name="J. Cell Biol.">
        <title>XCTK2: a kinesin-related protein that promotes mitotic spindle assembly in Xenopus laevis egg extracts.</title>
        <authorList>
            <person name="Walczak C.E."/>
            <person name="Verma S."/>
            <person name="Mitchison T.J."/>
        </authorList>
    </citation>
    <scope>NUCLEOTIDE SEQUENCE [MRNA]</scope>
    <source>
        <tissue>Ovary</tissue>
    </source>
</reference>
<name>CTK2_XENLA</name>
<keyword id="KW-0067">ATP-binding</keyword>
<keyword id="KW-0175">Coiled coil</keyword>
<keyword id="KW-0963">Cytoplasm</keyword>
<keyword id="KW-0206">Cytoskeleton</keyword>
<keyword id="KW-0493">Microtubule</keyword>
<keyword id="KW-0505">Motor protein</keyword>
<keyword id="KW-0547">Nucleotide-binding</keyword>
<keyword id="KW-1185">Reference proteome</keyword>
<sequence length="643" mass="71949">MDSTDKKVQVASRLPVPPKRKYVSNDENQEQMQRKRLRSSLESELPAVRVAASIATSKPRAAPVAALPKPQVIGRQSLAVMRPKNSGPGITSTSFSGKTKVSSSVTQPAAIGAEKKKRAAWDLKGQVNDMRDTVSNYKGKMQNLTGENARLLNSKEKLQREVEVLASENSKLSQERCTLESQLREVRQQVSTFEREVARLTELCQRQEKELSSHTNTIEELQGANAILTKQLLDKEVKLDCVSGENTSLKHTVNEQTDEIAALKVCLAEKDTEVHSLDTERRRLHNLVQELKGNIRVFCRVRPTLTPERELPAGHISFPSNDGKAIVLSKMEESHIGREKKDAVKYDFNFDCVFPPPCSQESVFEEISLLVQSALDGYPVCIFAYGQTGSGKTYTMEGPEDVTDDSMGMIPRAIHQIFSSAEELKAKGWQYTFTASFLEIYNETIRDLLINRPDKKLEYEIRKVNSANMLLYVTNLRYVKVSCVEEVHELLKIAKANRSVAKTAINDRSSRSHSVFQLKIEGENKQRDLKTSSMISLIDLAGSERLDRSLSTGDRLKETQCINTSLSTLGMVITSLCNKDSHIPYRNSKLTYLLQNSLGGNAKVLMFVNISPLEENFAESLNSLRFASKVNECVIGTARANRK</sequence>
<comment type="function">
    <text>Promotes mitotic spindle assembly.</text>
</comment>
<comment type="subcellular location">
    <subcellularLocation>
        <location evidence="4">Cytoplasm</location>
        <location evidence="4">Cytoskeleton</location>
    </subcellularLocation>
</comment>
<comment type="domain">
    <text>Composed of three structural domains; a small globular N-terminal, a central alpha-helical coiled coil and a large globular C-terminal which is responsible for the motor activity (it hydrolyzes ATP and binds microtubules).</text>
</comment>
<comment type="similarity">
    <text evidence="2">Belongs to the TRAFAC class myosin-kinesin ATPase superfamily. Kinesin family. NCD subfamily.</text>
</comment>
<dbReference type="EMBL" id="U82809">
    <property type="protein sequence ID" value="AAB40402.1"/>
    <property type="molecule type" value="mRNA"/>
</dbReference>
<dbReference type="RefSeq" id="NP_001081003.1">
    <property type="nucleotide sequence ID" value="NM_001087534.1"/>
</dbReference>
<dbReference type="SMR" id="P79955"/>
<dbReference type="IntAct" id="P79955">
    <property type="interactions" value="1"/>
</dbReference>
<dbReference type="DNASU" id="394322"/>
<dbReference type="GeneID" id="394322"/>
<dbReference type="KEGG" id="xla:394322"/>
<dbReference type="AGR" id="Xenbase:XB-GENE-865859"/>
<dbReference type="CTD" id="394322"/>
<dbReference type="Xenbase" id="XB-GENE-865859">
    <property type="gene designation" value="kifc1.L"/>
</dbReference>
<dbReference type="OrthoDB" id="3176171at2759"/>
<dbReference type="BRENDA" id="5.6.1.4">
    <property type="organism ID" value="6725"/>
</dbReference>
<dbReference type="Proteomes" id="UP000186698">
    <property type="component" value="Chromosome 8L"/>
</dbReference>
<dbReference type="Bgee" id="394322">
    <property type="expression patterns" value="Expressed in blastula and 15 other cell types or tissues"/>
</dbReference>
<dbReference type="GO" id="GO:0005737">
    <property type="term" value="C:cytoplasm"/>
    <property type="evidence" value="ECO:0007669"/>
    <property type="project" value="UniProtKB-KW"/>
</dbReference>
<dbReference type="GO" id="GO:0005874">
    <property type="term" value="C:microtubule"/>
    <property type="evidence" value="ECO:0007669"/>
    <property type="project" value="UniProtKB-KW"/>
</dbReference>
<dbReference type="GO" id="GO:0005524">
    <property type="term" value="F:ATP binding"/>
    <property type="evidence" value="ECO:0007669"/>
    <property type="project" value="UniProtKB-KW"/>
</dbReference>
<dbReference type="GO" id="GO:0008017">
    <property type="term" value="F:microtubule binding"/>
    <property type="evidence" value="ECO:0007669"/>
    <property type="project" value="InterPro"/>
</dbReference>
<dbReference type="GO" id="GO:0003777">
    <property type="term" value="F:microtubule motor activity"/>
    <property type="evidence" value="ECO:0007669"/>
    <property type="project" value="InterPro"/>
</dbReference>
<dbReference type="GO" id="GO:0007018">
    <property type="term" value="P:microtubule-based movement"/>
    <property type="evidence" value="ECO:0007669"/>
    <property type="project" value="InterPro"/>
</dbReference>
<dbReference type="CDD" id="cd01366">
    <property type="entry name" value="KISc_C_terminal"/>
    <property type="match status" value="1"/>
</dbReference>
<dbReference type="FunFam" id="3.40.850.10:FF:000046">
    <property type="entry name" value="Kinesin-like protein"/>
    <property type="match status" value="1"/>
</dbReference>
<dbReference type="Gene3D" id="1.20.5.340">
    <property type="match status" value="1"/>
</dbReference>
<dbReference type="Gene3D" id="3.40.850.10">
    <property type="entry name" value="Kinesin motor domain"/>
    <property type="match status" value="1"/>
</dbReference>
<dbReference type="InterPro" id="IPR027640">
    <property type="entry name" value="Kinesin-like_fam"/>
</dbReference>
<dbReference type="InterPro" id="IPR019821">
    <property type="entry name" value="Kinesin_motor_CS"/>
</dbReference>
<dbReference type="InterPro" id="IPR001752">
    <property type="entry name" value="Kinesin_motor_dom"/>
</dbReference>
<dbReference type="InterPro" id="IPR036961">
    <property type="entry name" value="Kinesin_motor_dom_sf"/>
</dbReference>
<dbReference type="InterPro" id="IPR027417">
    <property type="entry name" value="P-loop_NTPase"/>
</dbReference>
<dbReference type="PANTHER" id="PTHR47972">
    <property type="entry name" value="KINESIN-LIKE PROTEIN KLP-3"/>
    <property type="match status" value="1"/>
</dbReference>
<dbReference type="PANTHER" id="PTHR47972:SF45">
    <property type="entry name" value="PROTEIN CLARET SEGREGATIONAL"/>
    <property type="match status" value="1"/>
</dbReference>
<dbReference type="Pfam" id="PF00225">
    <property type="entry name" value="Kinesin"/>
    <property type="match status" value="1"/>
</dbReference>
<dbReference type="PRINTS" id="PR00380">
    <property type="entry name" value="KINESINHEAVY"/>
</dbReference>
<dbReference type="SMART" id="SM00129">
    <property type="entry name" value="KISc"/>
    <property type="match status" value="1"/>
</dbReference>
<dbReference type="SUPFAM" id="SSF90257">
    <property type="entry name" value="Myosin rod fragments"/>
    <property type="match status" value="1"/>
</dbReference>
<dbReference type="SUPFAM" id="SSF52540">
    <property type="entry name" value="P-loop containing nucleoside triphosphate hydrolases"/>
    <property type="match status" value="1"/>
</dbReference>
<dbReference type="PROSITE" id="PS00411">
    <property type="entry name" value="KINESIN_MOTOR_1"/>
    <property type="match status" value="1"/>
</dbReference>
<dbReference type="PROSITE" id="PS50067">
    <property type="entry name" value="KINESIN_MOTOR_2"/>
    <property type="match status" value="1"/>
</dbReference>
<evidence type="ECO:0000255" key="1"/>
<evidence type="ECO:0000255" key="2">
    <source>
        <dbReference type="PROSITE-ProRule" id="PRU00283"/>
    </source>
</evidence>
<evidence type="ECO:0000256" key="3">
    <source>
        <dbReference type="SAM" id="MobiDB-lite"/>
    </source>
</evidence>
<evidence type="ECO:0000305" key="4"/>
<protein>
    <recommendedName>
        <fullName>Carboxy-terminal kinesin 2</fullName>
    </recommendedName>
    <alternativeName>
        <fullName>XCTK2</fullName>
    </alternativeName>
</protein>
<organism>
    <name type="scientific">Xenopus laevis</name>
    <name type="common">African clawed frog</name>
    <dbReference type="NCBI Taxonomy" id="8355"/>
    <lineage>
        <taxon>Eukaryota</taxon>
        <taxon>Metazoa</taxon>
        <taxon>Chordata</taxon>
        <taxon>Craniata</taxon>
        <taxon>Vertebrata</taxon>
        <taxon>Euteleostomi</taxon>
        <taxon>Amphibia</taxon>
        <taxon>Batrachia</taxon>
        <taxon>Anura</taxon>
        <taxon>Pipoidea</taxon>
        <taxon>Pipidae</taxon>
        <taxon>Xenopodinae</taxon>
        <taxon>Xenopus</taxon>
        <taxon>Xenopus</taxon>
    </lineage>
</organism>